<feature type="chain" id="PRO_0000112722" description="Acetylornithine aminotransferase">
    <location>
        <begin position="1"/>
        <end position="431"/>
    </location>
</feature>
<feature type="binding site" evidence="1">
    <location>
        <begin position="118"/>
        <end position="119"/>
    </location>
    <ligand>
        <name>pyridoxal 5'-phosphate</name>
        <dbReference type="ChEBI" id="CHEBI:597326"/>
    </ligand>
</feature>
<feature type="binding site" evidence="1">
    <location>
        <position position="157"/>
    </location>
    <ligand>
        <name>pyridoxal 5'-phosphate</name>
        <dbReference type="ChEBI" id="CHEBI:597326"/>
    </ligand>
</feature>
<feature type="binding site" evidence="1">
    <location>
        <position position="160"/>
    </location>
    <ligand>
        <name>N(2)-acetyl-L-ornithine</name>
        <dbReference type="ChEBI" id="CHEBI:57805"/>
    </ligand>
</feature>
<feature type="binding site" evidence="1">
    <location>
        <begin position="251"/>
        <end position="254"/>
    </location>
    <ligand>
        <name>pyridoxal 5'-phosphate</name>
        <dbReference type="ChEBI" id="CHEBI:597326"/>
    </ligand>
</feature>
<feature type="binding site" evidence="1">
    <location>
        <position position="313"/>
    </location>
    <ligand>
        <name>N(2)-acetyl-L-ornithine</name>
        <dbReference type="ChEBI" id="CHEBI:57805"/>
    </ligand>
</feature>
<feature type="binding site" evidence="1">
    <location>
        <position position="314"/>
    </location>
    <ligand>
        <name>pyridoxal 5'-phosphate</name>
        <dbReference type="ChEBI" id="CHEBI:597326"/>
    </ligand>
</feature>
<feature type="modified residue" description="N6-(pyridoxal phosphate)lysine" evidence="1">
    <location>
        <position position="284"/>
    </location>
</feature>
<reference key="1">
    <citation type="journal article" date="2002" name="Proc. Natl. Acad. Sci. U.S.A.">
        <title>The genome sequence of Bifidobacterium longum reflects its adaptation to the human gastrointestinal tract.</title>
        <authorList>
            <person name="Schell M.A."/>
            <person name="Karmirantzou M."/>
            <person name="Snel B."/>
            <person name="Vilanova D."/>
            <person name="Berger B."/>
            <person name="Pessi G."/>
            <person name="Zwahlen M.-C."/>
            <person name="Desiere F."/>
            <person name="Bork P."/>
            <person name="Delley M."/>
            <person name="Pridmore R.D."/>
            <person name="Arigoni F."/>
        </authorList>
    </citation>
    <scope>NUCLEOTIDE SEQUENCE [LARGE SCALE GENOMIC DNA]</scope>
    <source>
        <strain>NCC 2705</strain>
    </source>
</reference>
<protein>
    <recommendedName>
        <fullName evidence="1">Acetylornithine aminotransferase</fullName>
        <shortName evidence="1">ACOAT</shortName>
        <ecNumber evidence="1">2.6.1.11</ecNumber>
    </recommendedName>
</protein>
<organism>
    <name type="scientific">Bifidobacterium longum (strain NCC 2705)</name>
    <dbReference type="NCBI Taxonomy" id="206672"/>
    <lineage>
        <taxon>Bacteria</taxon>
        <taxon>Bacillati</taxon>
        <taxon>Actinomycetota</taxon>
        <taxon>Actinomycetes</taxon>
        <taxon>Bifidobacteriales</taxon>
        <taxon>Bifidobacteriaceae</taxon>
        <taxon>Bifidobacterium</taxon>
    </lineage>
</organism>
<dbReference type="EC" id="2.6.1.11" evidence="1"/>
<dbReference type="EMBL" id="AE014295">
    <property type="protein sequence ID" value="AAN24869.1"/>
    <property type="molecule type" value="Genomic_DNA"/>
</dbReference>
<dbReference type="RefSeq" id="NP_696233.1">
    <property type="nucleotide sequence ID" value="NC_004307.2"/>
</dbReference>
<dbReference type="RefSeq" id="WP_007056889.1">
    <property type="nucleotide sequence ID" value="NC_004307.2"/>
</dbReference>
<dbReference type="SMR" id="P59315"/>
<dbReference type="STRING" id="206672.BL1061"/>
<dbReference type="EnsemblBacteria" id="AAN24869">
    <property type="protein sequence ID" value="AAN24869"/>
    <property type="gene ID" value="BL1061"/>
</dbReference>
<dbReference type="KEGG" id="blo:BL1061"/>
<dbReference type="PATRIC" id="fig|206672.9.peg.768"/>
<dbReference type="HOGENOM" id="CLU_016922_10_1_11"/>
<dbReference type="OrthoDB" id="9801052at2"/>
<dbReference type="PhylomeDB" id="P59315"/>
<dbReference type="UniPathway" id="UPA00068">
    <property type="reaction ID" value="UER00109"/>
</dbReference>
<dbReference type="Proteomes" id="UP000000439">
    <property type="component" value="Chromosome"/>
</dbReference>
<dbReference type="GO" id="GO:0005737">
    <property type="term" value="C:cytoplasm"/>
    <property type="evidence" value="ECO:0007669"/>
    <property type="project" value="UniProtKB-SubCell"/>
</dbReference>
<dbReference type="GO" id="GO:0042802">
    <property type="term" value="F:identical protein binding"/>
    <property type="evidence" value="ECO:0007669"/>
    <property type="project" value="TreeGrafter"/>
</dbReference>
<dbReference type="GO" id="GO:0003992">
    <property type="term" value="F:N2-acetyl-L-ornithine:2-oxoglutarate 5-aminotransferase activity"/>
    <property type="evidence" value="ECO:0007669"/>
    <property type="project" value="UniProtKB-UniRule"/>
</dbReference>
<dbReference type="GO" id="GO:0030170">
    <property type="term" value="F:pyridoxal phosphate binding"/>
    <property type="evidence" value="ECO:0007669"/>
    <property type="project" value="InterPro"/>
</dbReference>
<dbReference type="GO" id="GO:0006526">
    <property type="term" value="P:L-arginine biosynthetic process"/>
    <property type="evidence" value="ECO:0007669"/>
    <property type="project" value="UniProtKB-UniRule"/>
</dbReference>
<dbReference type="CDD" id="cd00610">
    <property type="entry name" value="OAT_like"/>
    <property type="match status" value="1"/>
</dbReference>
<dbReference type="FunFam" id="3.40.640.10:FF:000004">
    <property type="entry name" value="Acetylornithine aminotransferase"/>
    <property type="match status" value="1"/>
</dbReference>
<dbReference type="Gene3D" id="3.90.1150.10">
    <property type="entry name" value="Aspartate Aminotransferase, domain 1"/>
    <property type="match status" value="1"/>
</dbReference>
<dbReference type="Gene3D" id="3.40.640.10">
    <property type="entry name" value="Type I PLP-dependent aspartate aminotransferase-like (Major domain)"/>
    <property type="match status" value="1"/>
</dbReference>
<dbReference type="HAMAP" id="MF_01107">
    <property type="entry name" value="ArgD_aminotrans_3"/>
    <property type="match status" value="1"/>
</dbReference>
<dbReference type="InterPro" id="IPR004636">
    <property type="entry name" value="AcOrn/SuccOrn_fam"/>
</dbReference>
<dbReference type="InterPro" id="IPR005814">
    <property type="entry name" value="Aminotrans_3"/>
</dbReference>
<dbReference type="InterPro" id="IPR049704">
    <property type="entry name" value="Aminotrans_3_PPA_site"/>
</dbReference>
<dbReference type="InterPro" id="IPR050103">
    <property type="entry name" value="Class-III_PLP-dep_AT"/>
</dbReference>
<dbReference type="InterPro" id="IPR015424">
    <property type="entry name" value="PyrdxlP-dep_Trfase"/>
</dbReference>
<dbReference type="InterPro" id="IPR015421">
    <property type="entry name" value="PyrdxlP-dep_Trfase_major"/>
</dbReference>
<dbReference type="InterPro" id="IPR015422">
    <property type="entry name" value="PyrdxlP-dep_Trfase_small"/>
</dbReference>
<dbReference type="NCBIfam" id="TIGR00707">
    <property type="entry name" value="argD"/>
    <property type="match status" value="1"/>
</dbReference>
<dbReference type="NCBIfam" id="NF002874">
    <property type="entry name" value="PRK03244.1"/>
    <property type="match status" value="1"/>
</dbReference>
<dbReference type="PANTHER" id="PTHR11986:SF79">
    <property type="entry name" value="ACETYLORNITHINE AMINOTRANSFERASE, MITOCHONDRIAL"/>
    <property type="match status" value="1"/>
</dbReference>
<dbReference type="PANTHER" id="PTHR11986">
    <property type="entry name" value="AMINOTRANSFERASE CLASS III"/>
    <property type="match status" value="1"/>
</dbReference>
<dbReference type="Pfam" id="PF00202">
    <property type="entry name" value="Aminotran_3"/>
    <property type="match status" value="1"/>
</dbReference>
<dbReference type="PIRSF" id="PIRSF000521">
    <property type="entry name" value="Transaminase_4ab_Lys_Orn"/>
    <property type="match status" value="1"/>
</dbReference>
<dbReference type="SUPFAM" id="SSF53383">
    <property type="entry name" value="PLP-dependent transferases"/>
    <property type="match status" value="1"/>
</dbReference>
<dbReference type="PROSITE" id="PS00600">
    <property type="entry name" value="AA_TRANSFER_CLASS_3"/>
    <property type="match status" value="1"/>
</dbReference>
<sequence length="431" mass="45615">MATEHEEKLGTEDSKWLGEYSQVHMNVFGTPLRVMDHGQGAHIWDVDGNEYLDFLAGIAVNSLGYAHPKWVKAVADQAAKVAHISNYFASEPQIELASKLVKLAGAPEGSKVYFGNSGAEGNEAALKLAKLYGRTLPGALPSIGGKPARILAMTHGFHGRTMGALSATWKPGIRKPYDPLVPNIEFVRAGDKVALHDAFAQTGLGRYGKGPVAAVILELIQGEAGVQPLGADYVKFVRELCDINHALLIIDEVQTGIGRTGKWFAFQRDDLSGGVTPDMVTFAKGVAGGFPMGGMIAFGEKLAALFTPGSHGSTFAGNPLGAAAGLATLDVIEDENLVANAEARGEQLRDGIMATGNPLFVSVRGRGLLDAVELKHPCSHAVMNYCLEHGLIVNAVAPNALRFAPPLIVTAQDVDQALAILKDVPTDLPDD</sequence>
<gene>
    <name evidence="1" type="primary">argD</name>
    <name type="ordered locus">BL1061</name>
</gene>
<keyword id="KW-0028">Amino-acid biosynthesis</keyword>
<keyword id="KW-0032">Aminotransferase</keyword>
<keyword id="KW-0055">Arginine biosynthesis</keyword>
<keyword id="KW-0963">Cytoplasm</keyword>
<keyword id="KW-0663">Pyridoxal phosphate</keyword>
<keyword id="KW-1185">Reference proteome</keyword>
<keyword id="KW-0808">Transferase</keyword>
<name>ARGD_BIFLO</name>
<evidence type="ECO:0000255" key="1">
    <source>
        <dbReference type="HAMAP-Rule" id="MF_01107"/>
    </source>
</evidence>
<proteinExistence type="inferred from homology"/>
<comment type="catalytic activity">
    <reaction evidence="1">
        <text>N(2)-acetyl-L-ornithine + 2-oxoglutarate = N-acetyl-L-glutamate 5-semialdehyde + L-glutamate</text>
        <dbReference type="Rhea" id="RHEA:18049"/>
        <dbReference type="ChEBI" id="CHEBI:16810"/>
        <dbReference type="ChEBI" id="CHEBI:29123"/>
        <dbReference type="ChEBI" id="CHEBI:29985"/>
        <dbReference type="ChEBI" id="CHEBI:57805"/>
        <dbReference type="EC" id="2.6.1.11"/>
    </reaction>
</comment>
<comment type="cofactor">
    <cofactor evidence="1">
        <name>pyridoxal 5'-phosphate</name>
        <dbReference type="ChEBI" id="CHEBI:597326"/>
    </cofactor>
    <text evidence="1">Binds 1 pyridoxal phosphate per subunit.</text>
</comment>
<comment type="pathway">
    <text evidence="1">Amino-acid biosynthesis; L-arginine biosynthesis; N(2)-acetyl-L-ornithine from L-glutamate: step 4/4.</text>
</comment>
<comment type="subunit">
    <text evidence="1">Homodimer.</text>
</comment>
<comment type="subcellular location">
    <subcellularLocation>
        <location evidence="1">Cytoplasm</location>
    </subcellularLocation>
</comment>
<comment type="miscellaneous">
    <text evidence="1">May also have succinyldiaminopimelate aminotransferase activity, thus carrying out the corresponding step in lysine biosynthesis.</text>
</comment>
<comment type="similarity">
    <text evidence="1">Belongs to the class-III pyridoxal-phosphate-dependent aminotransferase family. ArgD subfamily.</text>
</comment>
<accession>P59315</accession>